<name>YFDO_ECOL6</name>
<gene>
    <name type="primary">yfdO</name>
    <name type="ordered locus">c3192</name>
</gene>
<reference key="1">
    <citation type="journal article" date="2002" name="Proc. Natl. Acad. Sci. U.S.A.">
        <title>Extensive mosaic structure revealed by the complete genome sequence of uropathogenic Escherichia coli.</title>
        <authorList>
            <person name="Welch R.A."/>
            <person name="Burland V."/>
            <person name="Plunkett G. III"/>
            <person name="Redford P."/>
            <person name="Roesch P."/>
            <person name="Rasko D."/>
            <person name="Buckles E.L."/>
            <person name="Liou S.-R."/>
            <person name="Boutin A."/>
            <person name="Hackett J."/>
            <person name="Stroud D."/>
            <person name="Mayhew G.F."/>
            <person name="Rose D.J."/>
            <person name="Zhou S."/>
            <person name="Schwartz D.C."/>
            <person name="Perna N.T."/>
            <person name="Mobley H.L.T."/>
            <person name="Donnenberg M.S."/>
            <person name="Blattner F.R."/>
        </authorList>
    </citation>
    <scope>NUCLEOTIDE SEQUENCE [LARGE SCALE GENOMIC DNA]</scope>
    <source>
        <strain>CFT073 / ATCC 700928 / UPEC</strain>
    </source>
</reference>
<protein>
    <recommendedName>
        <fullName>Uncharacterized protein YfdO</fullName>
    </recommendedName>
</protein>
<keyword id="KW-1185">Reference proteome</keyword>
<comment type="similarity">
    <text evidence="1">Belongs to the phage O protein family.</text>
</comment>
<comment type="sequence caution" evidence="1">
    <conflict type="erroneous initiation">
        <sequence resource="EMBL-CDS" id="AAN81644"/>
    </conflict>
</comment>
<feature type="chain" id="PRO_0000169208" description="Uncharacterized protein YfdO">
    <location>
        <begin position="1"/>
        <end position="122"/>
    </location>
</feature>
<accession>P0AD36</accession>
<accession>P76511</accession>
<accession>P76943</accession>
<proteinExistence type="inferred from homology"/>
<sequence length="122" mass="14401">MTCAQWLWKKIIALYEQAAECDGEVVRPKEPNWTAWANEIRLMCVQDGRTHKQICEMYSRVSRDPFWCRNVLSPSKLREKWDELSLRLSPSVSTYTEKREDPYFKASYDNVDYSQIPAGFRG</sequence>
<organism>
    <name type="scientific">Escherichia coli O6:H1 (strain CFT073 / ATCC 700928 / UPEC)</name>
    <dbReference type="NCBI Taxonomy" id="199310"/>
    <lineage>
        <taxon>Bacteria</taxon>
        <taxon>Pseudomonadati</taxon>
        <taxon>Pseudomonadota</taxon>
        <taxon>Gammaproteobacteria</taxon>
        <taxon>Enterobacterales</taxon>
        <taxon>Enterobacteriaceae</taxon>
        <taxon>Escherichia</taxon>
    </lineage>
</organism>
<dbReference type="EMBL" id="AE014075">
    <property type="protein sequence ID" value="AAN81644.1"/>
    <property type="status" value="ALT_INIT"/>
    <property type="molecule type" value="Genomic_DNA"/>
</dbReference>
<dbReference type="STRING" id="199310.c3192"/>
<dbReference type="KEGG" id="ecc:c3192"/>
<dbReference type="eggNOG" id="COG1846">
    <property type="taxonomic scope" value="Bacteria"/>
</dbReference>
<dbReference type="HOGENOM" id="CLU_047944_1_0_6"/>
<dbReference type="Proteomes" id="UP000001410">
    <property type="component" value="Chromosome"/>
</dbReference>
<evidence type="ECO:0000305" key="1"/>